<keyword id="KW-0007">Acetylation</keyword>
<keyword id="KW-0156">Chromatin regulator</keyword>
<keyword id="KW-0539">Nucleus</keyword>
<keyword id="KW-1185">Reference proteome</keyword>
<keyword id="KW-0677">Repeat</keyword>
<keyword id="KW-0678">Repressor</keyword>
<keyword id="KW-0804">Transcription</keyword>
<keyword id="KW-0805">Transcription regulation</keyword>
<keyword id="KW-0853">WD repeat</keyword>
<evidence type="ECO:0000250" key="1"/>
<evidence type="ECO:0000250" key="2">
    <source>
        <dbReference type="UniProtKB" id="O22607"/>
    </source>
</evidence>
<evidence type="ECO:0000256" key="3">
    <source>
        <dbReference type="SAM" id="MobiDB-lite"/>
    </source>
</evidence>
<evidence type="ECO:0000305" key="4"/>
<comment type="function">
    <text evidence="1">Core histone-binding subunit that may target chromatin assembly factors, chromatin remodeling factors and histone deacetylases to their histone substrates in a manner that is regulated by nucleosomal DNA.</text>
</comment>
<comment type="interaction">
    <interactant intactId="EBI-1632794">
        <id>O22469</id>
    </interactant>
    <interactant intactId="EBI-1632780">
        <id>Q9M0V3</id>
        <label>DDB1A</label>
    </interactant>
    <organismsDiffer>false</organismsDiffer>
    <experiments>2</experiments>
</comment>
<comment type="subcellular location">
    <subcellularLocation>
        <location evidence="1">Nucleus</location>
    </subcellularLocation>
</comment>
<comment type="domain">
    <text evidence="1">The DWD box is required for interaction with DDB1A.</text>
</comment>
<comment type="similarity">
    <text evidence="4">Belongs to the WD repeat RBAP46/RBAP48/MSI1 family.</text>
</comment>
<sequence length="424" mass="47983">MAAEEGKDEAGLDQVEEEFSIWKRNTPFLYDLMISHPLEWPSLTLHWVPSTPIPYSKDPYFAVHKLILGTHTSGGAQDFLMVADVVIPTPDAEPGLGGRDQEPIVPKVEIKQKIRVDGEVNRARCMPQKPTLVGAKTSGSEVFLFDYARLSGKPQTSECDPDLRLMGHEQEGYGLAWSSFKEGYLLSGSQDQRICLWDVSATATDKVLNPMHVYEGHQSIIEDVAWHMKNENIFGSAGDDCQLVIWDLRTNQMQHQVKVHEREINYLSFNPFNEWVLATASSDSTVALFDLRKLTAPLHVLSKHEGEVFQVEWDPNHETVLASSGEDRRLMVWDINRVGDEQLEIELDAEDGPPELLFSHGGHKAKISDFAWNKDEPWVISSVAEDNSLQVWQMAESIYREDDEDEDDDDEGNQNAQHSNENQK</sequence>
<gene>
    <name type="primary">MSI3</name>
    <name type="ordered locus">At4g35050</name>
    <name type="ORF">M4E13.110</name>
</gene>
<dbReference type="EMBL" id="AF016848">
    <property type="protein sequence ID" value="AAB70244.1"/>
    <property type="molecule type" value="mRNA"/>
</dbReference>
<dbReference type="EMBL" id="AL022023">
    <property type="protein sequence ID" value="CAA17770.1"/>
    <property type="molecule type" value="Genomic_DNA"/>
</dbReference>
<dbReference type="EMBL" id="AL161586">
    <property type="protein sequence ID" value="CAB80222.1"/>
    <property type="molecule type" value="Genomic_DNA"/>
</dbReference>
<dbReference type="EMBL" id="CP002687">
    <property type="protein sequence ID" value="AEE86455.1"/>
    <property type="molecule type" value="Genomic_DNA"/>
</dbReference>
<dbReference type="PIR" id="T05775">
    <property type="entry name" value="T05775"/>
</dbReference>
<dbReference type="RefSeq" id="NP_195231.1">
    <property type="nucleotide sequence ID" value="NM_119671.3"/>
</dbReference>
<dbReference type="SMR" id="O22469"/>
<dbReference type="BioGRID" id="14939">
    <property type="interactions" value="2"/>
</dbReference>
<dbReference type="FunCoup" id="O22469">
    <property type="interactions" value="717"/>
</dbReference>
<dbReference type="IntAct" id="O22469">
    <property type="interactions" value="1"/>
</dbReference>
<dbReference type="STRING" id="3702.O22469"/>
<dbReference type="PaxDb" id="3702-AT4G35050.1"/>
<dbReference type="ProteomicsDB" id="250784"/>
<dbReference type="EnsemblPlants" id="AT4G35050.1">
    <property type="protein sequence ID" value="AT4G35050.1"/>
    <property type="gene ID" value="AT4G35050"/>
</dbReference>
<dbReference type="GeneID" id="829657"/>
<dbReference type="Gramene" id="AT4G35050.1">
    <property type="protein sequence ID" value="AT4G35050.1"/>
    <property type="gene ID" value="AT4G35050"/>
</dbReference>
<dbReference type="KEGG" id="ath:AT4G35050"/>
<dbReference type="Araport" id="AT4G35050"/>
<dbReference type="TAIR" id="AT4G35050">
    <property type="gene designation" value="MSI3"/>
</dbReference>
<dbReference type="eggNOG" id="KOG0264">
    <property type="taxonomic scope" value="Eukaryota"/>
</dbReference>
<dbReference type="HOGENOM" id="CLU_020445_3_1_1"/>
<dbReference type="InParanoid" id="O22469"/>
<dbReference type="OMA" id="AWNKDEP"/>
<dbReference type="OrthoDB" id="427795at2759"/>
<dbReference type="PhylomeDB" id="O22469"/>
<dbReference type="CD-CODE" id="4299E36E">
    <property type="entry name" value="Nucleolus"/>
</dbReference>
<dbReference type="PRO" id="PR:O22469"/>
<dbReference type="Proteomes" id="UP000006548">
    <property type="component" value="Chromosome 4"/>
</dbReference>
<dbReference type="ExpressionAtlas" id="O22469">
    <property type="expression patterns" value="baseline and differential"/>
</dbReference>
<dbReference type="GO" id="GO:0080008">
    <property type="term" value="C:Cul4-RING E3 ubiquitin ligase complex"/>
    <property type="evidence" value="ECO:0000353"/>
    <property type="project" value="TAIR"/>
</dbReference>
<dbReference type="GO" id="GO:0031010">
    <property type="term" value="C:ISWI-type complex"/>
    <property type="evidence" value="ECO:0000314"/>
    <property type="project" value="TAIR"/>
</dbReference>
<dbReference type="GO" id="GO:0006325">
    <property type="term" value="P:chromatin organization"/>
    <property type="evidence" value="ECO:0007669"/>
    <property type="project" value="UniProtKB-KW"/>
</dbReference>
<dbReference type="FunFam" id="2.130.10.10:FF:000512">
    <property type="entry name" value="WD-40 repeat-containing protein MSI1"/>
    <property type="match status" value="1"/>
</dbReference>
<dbReference type="Gene3D" id="2.130.10.10">
    <property type="entry name" value="YVTN repeat-like/Quinoprotein amine dehydrogenase"/>
    <property type="match status" value="1"/>
</dbReference>
<dbReference type="InterPro" id="IPR020472">
    <property type="entry name" value="G-protein_beta_WD-40_rep"/>
</dbReference>
<dbReference type="InterPro" id="IPR022052">
    <property type="entry name" value="Histone-bd_RBBP4-like_N"/>
</dbReference>
<dbReference type="InterPro" id="IPR015943">
    <property type="entry name" value="WD40/YVTN_repeat-like_dom_sf"/>
</dbReference>
<dbReference type="InterPro" id="IPR019775">
    <property type="entry name" value="WD40_repeat_CS"/>
</dbReference>
<dbReference type="InterPro" id="IPR036322">
    <property type="entry name" value="WD40_repeat_dom_sf"/>
</dbReference>
<dbReference type="InterPro" id="IPR001680">
    <property type="entry name" value="WD40_rpt"/>
</dbReference>
<dbReference type="InterPro" id="IPR050459">
    <property type="entry name" value="WD_repeat_RBAP46/RBAP48/MSI1"/>
</dbReference>
<dbReference type="PANTHER" id="PTHR22850">
    <property type="entry name" value="WD40 REPEAT FAMILY"/>
    <property type="match status" value="1"/>
</dbReference>
<dbReference type="Pfam" id="PF12265">
    <property type="entry name" value="CAF1C_H4-bd"/>
    <property type="match status" value="1"/>
</dbReference>
<dbReference type="Pfam" id="PF00400">
    <property type="entry name" value="WD40"/>
    <property type="match status" value="5"/>
</dbReference>
<dbReference type="PRINTS" id="PR00320">
    <property type="entry name" value="GPROTEINBRPT"/>
</dbReference>
<dbReference type="SMART" id="SM00320">
    <property type="entry name" value="WD40"/>
    <property type="match status" value="5"/>
</dbReference>
<dbReference type="SUPFAM" id="SSF50978">
    <property type="entry name" value="WD40 repeat-like"/>
    <property type="match status" value="1"/>
</dbReference>
<dbReference type="PROSITE" id="PS00678">
    <property type="entry name" value="WD_REPEATS_1"/>
    <property type="match status" value="2"/>
</dbReference>
<dbReference type="PROSITE" id="PS50082">
    <property type="entry name" value="WD_REPEATS_2"/>
    <property type="match status" value="4"/>
</dbReference>
<dbReference type="PROSITE" id="PS50294">
    <property type="entry name" value="WD_REPEATS_REGION"/>
    <property type="match status" value="1"/>
</dbReference>
<organism>
    <name type="scientific">Arabidopsis thaliana</name>
    <name type="common">Mouse-ear cress</name>
    <dbReference type="NCBI Taxonomy" id="3702"/>
    <lineage>
        <taxon>Eukaryota</taxon>
        <taxon>Viridiplantae</taxon>
        <taxon>Streptophyta</taxon>
        <taxon>Embryophyta</taxon>
        <taxon>Tracheophyta</taxon>
        <taxon>Spermatophyta</taxon>
        <taxon>Magnoliopsida</taxon>
        <taxon>eudicotyledons</taxon>
        <taxon>Gunneridae</taxon>
        <taxon>Pentapetalae</taxon>
        <taxon>rosids</taxon>
        <taxon>malvids</taxon>
        <taxon>Brassicales</taxon>
        <taxon>Brassicaceae</taxon>
        <taxon>Camelineae</taxon>
        <taxon>Arabidopsis</taxon>
    </lineage>
</organism>
<reference key="1">
    <citation type="journal article" date="1997" name="Plant Cell">
        <title>A conserved family of WD-40 proteins binds to the retinoblastoma protein in both plants and animals.</title>
        <authorList>
            <person name="Ach R.A."/>
            <person name="Taranto P."/>
            <person name="Gruissem W."/>
        </authorList>
    </citation>
    <scope>NUCLEOTIDE SEQUENCE [MRNA]</scope>
</reference>
<reference key="2">
    <citation type="journal article" date="1999" name="Nature">
        <title>Sequence and analysis of chromosome 4 of the plant Arabidopsis thaliana.</title>
        <authorList>
            <person name="Mayer K.F.X."/>
            <person name="Schueller C."/>
            <person name="Wambutt R."/>
            <person name="Murphy G."/>
            <person name="Volckaert G."/>
            <person name="Pohl T."/>
            <person name="Duesterhoeft A."/>
            <person name="Stiekema W."/>
            <person name="Entian K.-D."/>
            <person name="Terryn N."/>
            <person name="Harris B."/>
            <person name="Ansorge W."/>
            <person name="Brandt P."/>
            <person name="Grivell L.A."/>
            <person name="Rieger M."/>
            <person name="Weichselgartner M."/>
            <person name="de Simone V."/>
            <person name="Obermaier B."/>
            <person name="Mache R."/>
            <person name="Mueller M."/>
            <person name="Kreis M."/>
            <person name="Delseny M."/>
            <person name="Puigdomenech P."/>
            <person name="Watson M."/>
            <person name="Schmidtheini T."/>
            <person name="Reichert B."/>
            <person name="Portetelle D."/>
            <person name="Perez-Alonso M."/>
            <person name="Boutry M."/>
            <person name="Bancroft I."/>
            <person name="Vos P."/>
            <person name="Hoheisel J."/>
            <person name="Zimmermann W."/>
            <person name="Wedler H."/>
            <person name="Ridley P."/>
            <person name="Langham S.-A."/>
            <person name="McCullagh B."/>
            <person name="Bilham L."/>
            <person name="Robben J."/>
            <person name="van der Schueren J."/>
            <person name="Grymonprez B."/>
            <person name="Chuang Y.-J."/>
            <person name="Vandenbussche F."/>
            <person name="Braeken M."/>
            <person name="Weltjens I."/>
            <person name="Voet M."/>
            <person name="Bastiaens I."/>
            <person name="Aert R."/>
            <person name="Defoor E."/>
            <person name="Weitzenegger T."/>
            <person name="Bothe G."/>
            <person name="Ramsperger U."/>
            <person name="Hilbert H."/>
            <person name="Braun M."/>
            <person name="Holzer E."/>
            <person name="Brandt A."/>
            <person name="Peters S."/>
            <person name="van Staveren M."/>
            <person name="Dirkse W."/>
            <person name="Mooijman P."/>
            <person name="Klein Lankhorst R."/>
            <person name="Rose M."/>
            <person name="Hauf J."/>
            <person name="Koetter P."/>
            <person name="Berneiser S."/>
            <person name="Hempel S."/>
            <person name="Feldpausch M."/>
            <person name="Lamberth S."/>
            <person name="Van den Daele H."/>
            <person name="De Keyser A."/>
            <person name="Buysshaert C."/>
            <person name="Gielen J."/>
            <person name="Villarroel R."/>
            <person name="De Clercq R."/>
            <person name="van Montagu M."/>
            <person name="Rogers J."/>
            <person name="Cronin A."/>
            <person name="Quail M.A."/>
            <person name="Bray-Allen S."/>
            <person name="Clark L."/>
            <person name="Doggett J."/>
            <person name="Hall S."/>
            <person name="Kay M."/>
            <person name="Lennard N."/>
            <person name="McLay K."/>
            <person name="Mayes R."/>
            <person name="Pettett A."/>
            <person name="Rajandream M.A."/>
            <person name="Lyne M."/>
            <person name="Benes V."/>
            <person name="Rechmann S."/>
            <person name="Borkova D."/>
            <person name="Bloecker H."/>
            <person name="Scharfe M."/>
            <person name="Grimm M."/>
            <person name="Loehnert T.-H."/>
            <person name="Dose S."/>
            <person name="de Haan M."/>
            <person name="Maarse A.C."/>
            <person name="Schaefer M."/>
            <person name="Mueller-Auer S."/>
            <person name="Gabel C."/>
            <person name="Fuchs M."/>
            <person name="Fartmann B."/>
            <person name="Granderath K."/>
            <person name="Dauner D."/>
            <person name="Herzl A."/>
            <person name="Neumann S."/>
            <person name="Argiriou A."/>
            <person name="Vitale D."/>
            <person name="Liguori R."/>
            <person name="Piravandi E."/>
            <person name="Massenet O."/>
            <person name="Quigley F."/>
            <person name="Clabauld G."/>
            <person name="Muendlein A."/>
            <person name="Felber R."/>
            <person name="Schnabl S."/>
            <person name="Hiller R."/>
            <person name="Schmidt W."/>
            <person name="Lecharny A."/>
            <person name="Aubourg S."/>
            <person name="Chefdor F."/>
            <person name="Cooke R."/>
            <person name="Berger C."/>
            <person name="Monfort A."/>
            <person name="Casacuberta E."/>
            <person name="Gibbons T."/>
            <person name="Weber N."/>
            <person name="Vandenbol M."/>
            <person name="Bargues M."/>
            <person name="Terol J."/>
            <person name="Torres A."/>
            <person name="Perez-Perez A."/>
            <person name="Purnelle B."/>
            <person name="Bent E."/>
            <person name="Johnson S."/>
            <person name="Tacon D."/>
            <person name="Jesse T."/>
            <person name="Heijnen L."/>
            <person name="Schwarz S."/>
            <person name="Scholler P."/>
            <person name="Heber S."/>
            <person name="Francs P."/>
            <person name="Bielke C."/>
            <person name="Frishman D."/>
            <person name="Haase D."/>
            <person name="Lemcke K."/>
            <person name="Mewes H.-W."/>
            <person name="Stocker S."/>
            <person name="Zaccaria P."/>
            <person name="Bevan M."/>
            <person name="Wilson R.K."/>
            <person name="de la Bastide M."/>
            <person name="Habermann K."/>
            <person name="Parnell L."/>
            <person name="Dedhia N."/>
            <person name="Gnoj L."/>
            <person name="Schutz K."/>
            <person name="Huang E."/>
            <person name="Spiegel L."/>
            <person name="Sekhon M."/>
            <person name="Murray J."/>
            <person name="Sheet P."/>
            <person name="Cordes M."/>
            <person name="Abu-Threideh J."/>
            <person name="Stoneking T."/>
            <person name="Kalicki J."/>
            <person name="Graves T."/>
            <person name="Harmon G."/>
            <person name="Edwards J."/>
            <person name="Latreille P."/>
            <person name="Courtney L."/>
            <person name="Cloud J."/>
            <person name="Abbott A."/>
            <person name="Scott K."/>
            <person name="Johnson D."/>
            <person name="Minx P."/>
            <person name="Bentley D."/>
            <person name="Fulton B."/>
            <person name="Miller N."/>
            <person name="Greco T."/>
            <person name="Kemp K."/>
            <person name="Kramer J."/>
            <person name="Fulton L."/>
            <person name="Mardis E."/>
            <person name="Dante M."/>
            <person name="Pepin K."/>
            <person name="Hillier L.W."/>
            <person name="Nelson J."/>
            <person name="Spieth J."/>
            <person name="Ryan E."/>
            <person name="Andrews S."/>
            <person name="Geisel C."/>
            <person name="Layman D."/>
            <person name="Du H."/>
            <person name="Ali J."/>
            <person name="Berghoff A."/>
            <person name="Jones K."/>
            <person name="Drone K."/>
            <person name="Cotton M."/>
            <person name="Joshu C."/>
            <person name="Antonoiu B."/>
            <person name="Zidanic M."/>
            <person name="Strong C."/>
            <person name="Sun H."/>
            <person name="Lamar B."/>
            <person name="Yordan C."/>
            <person name="Ma P."/>
            <person name="Zhong J."/>
            <person name="Preston R."/>
            <person name="Vil D."/>
            <person name="Shekher M."/>
            <person name="Matero A."/>
            <person name="Shah R."/>
            <person name="Swaby I.K."/>
            <person name="O'Shaughnessy A."/>
            <person name="Rodriguez M."/>
            <person name="Hoffman J."/>
            <person name="Till S."/>
            <person name="Granat S."/>
            <person name="Shohdy N."/>
            <person name="Hasegawa A."/>
            <person name="Hameed A."/>
            <person name="Lodhi M."/>
            <person name="Johnson A."/>
            <person name="Chen E."/>
            <person name="Marra M.A."/>
            <person name="Martienssen R."/>
            <person name="McCombie W.R."/>
        </authorList>
    </citation>
    <scope>NUCLEOTIDE SEQUENCE [LARGE SCALE GENOMIC DNA]</scope>
    <source>
        <strain>cv. Columbia</strain>
    </source>
</reference>
<reference key="3">
    <citation type="journal article" date="2017" name="Plant J.">
        <title>Araport11: a complete reannotation of the Arabidopsis thaliana reference genome.</title>
        <authorList>
            <person name="Cheng C.Y."/>
            <person name="Krishnakumar V."/>
            <person name="Chan A.P."/>
            <person name="Thibaud-Nissen F."/>
            <person name="Schobel S."/>
            <person name="Town C.D."/>
        </authorList>
    </citation>
    <scope>GENOME REANNOTATION</scope>
    <source>
        <strain>cv. Columbia</strain>
    </source>
</reference>
<reference key="4">
    <citation type="journal article" date="2008" name="Plant Cell">
        <title>Characterization of Arabidopsis and rice DWD proteins and their roles as substrate receptors for CUL4-RING E3 ubiquitin ligases.</title>
        <authorList>
            <person name="Lee J.H."/>
            <person name="Terzaghi W."/>
            <person name="Gusmaroli G."/>
            <person name="Charron J.B."/>
            <person name="Yoon H.J."/>
            <person name="Chen H."/>
            <person name="He Y.J."/>
            <person name="Xiong Y."/>
            <person name="Deng X.W."/>
        </authorList>
    </citation>
    <scope>DWD MOTIF</scope>
</reference>
<accession>O22469</accession>
<accession>O49612</accession>
<proteinExistence type="evidence at protein level"/>
<feature type="chain" id="PRO_0000051082" description="WD-40 repeat-containing protein MSI3">
    <location>
        <begin position="1"/>
        <end position="424"/>
    </location>
</feature>
<feature type="repeat" description="WD 1">
    <location>
        <begin position="167"/>
        <end position="207"/>
    </location>
</feature>
<feature type="repeat" description="WD 2">
    <location>
        <begin position="216"/>
        <end position="256"/>
    </location>
</feature>
<feature type="repeat" description="WD 3">
    <location>
        <begin position="259"/>
        <end position="299"/>
    </location>
</feature>
<feature type="repeat" description="WD 4">
    <location>
        <begin position="303"/>
        <end position="343"/>
    </location>
</feature>
<feature type="repeat" description="WD 5">
    <location>
        <begin position="362"/>
        <end position="402"/>
    </location>
</feature>
<feature type="region of interest" description="Disordered" evidence="3">
    <location>
        <begin position="394"/>
        <end position="424"/>
    </location>
</feature>
<feature type="short sequence motif" description="DWD box">
    <location>
        <begin position="233"/>
        <end position="249"/>
    </location>
</feature>
<feature type="compositionally biased region" description="Acidic residues" evidence="3">
    <location>
        <begin position="401"/>
        <end position="412"/>
    </location>
</feature>
<feature type="compositionally biased region" description="Polar residues" evidence="3">
    <location>
        <begin position="413"/>
        <end position="424"/>
    </location>
</feature>
<feature type="modified residue" description="N-acetylmethionine" evidence="2">
    <location>
        <position position="1"/>
    </location>
</feature>
<feature type="sequence conflict" description="In Ref. 1; AAB70244." evidence="4" ref="1">
    <original>DV</original>
    <variation>EL</variation>
    <location>
        <begin position="223"/>
        <end position="224"/>
    </location>
</feature>
<protein>
    <recommendedName>
        <fullName>WD-40 repeat-containing protein MSI3</fullName>
    </recommendedName>
</protein>
<name>MSI3_ARATH</name>